<evidence type="ECO:0000250" key="1">
    <source>
        <dbReference type="UniProtKB" id="A0A0D4WTV1"/>
    </source>
</evidence>
<evidence type="ECO:0000250" key="2">
    <source>
        <dbReference type="UniProtKB" id="A0A0D4WV12"/>
    </source>
</evidence>
<evidence type="ECO:0000250" key="3">
    <source>
        <dbReference type="UniProtKB" id="P0CE80"/>
    </source>
</evidence>
<evidence type="ECO:0000250" key="4">
    <source>
        <dbReference type="UniProtKB" id="Q4ZFU2"/>
    </source>
</evidence>
<evidence type="ECO:0000250" key="5">
    <source>
        <dbReference type="UniProtKB" id="Q8I914"/>
    </source>
</evidence>
<evidence type="ECO:0000303" key="6">
    <source>
    </source>
</evidence>
<evidence type="ECO:0000305" key="7"/>
<evidence type="ECO:0000305" key="8">
    <source>
    </source>
</evidence>
<sequence>MGHMVNAVKQIPTFLDLGANALEMDVTFKNEEPTYTYHGVPCDAFRDCIRWEYFNVFAKTLREYTTPGFDKYREQLILLVFDLKTGDMNNAQARTAGVNTAKQLLQYYWNNDNNGGRAYVVLSIPDIAQHELIKGFKETLKKEGHENLLDKVGYDFSGPYLPRLPTLDETHEAFKKAGVEGHVWLSDGLTNFSPLGDMARLKEAIKSRDSANGFINKIYYWSVDKVSTAEKALKVGVDGIVTNHPDVIIGVLNENGFKDKYRLATYDDDPWETFGK</sequence>
<reference key="1">
    <citation type="journal article" date="2009" name="Mol. Biol. Evol.">
        <title>Molecular evolution, functional variation, and proposed nomenclature of the gene family that includes sphingomyelinase D in sicariid spider venoms.</title>
        <authorList>
            <person name="Binford G.J."/>
            <person name="Bodner M.R."/>
            <person name="Cordes M.H."/>
            <person name="Baldwin K.L."/>
            <person name="Rynerson M.R."/>
            <person name="Burns S.N."/>
            <person name="Zobel-Thropp P.A."/>
        </authorList>
    </citation>
    <scope>NUCLEOTIDE SEQUENCE [MRNA]</scope>
    <scope>NOMENCLATURE</scope>
    <source>
        <tissue>Venom gland</tissue>
    </source>
</reference>
<dbReference type="EC" id="4.6.1.-" evidence="4"/>
<dbReference type="EMBL" id="FJ171445">
    <property type="protein sequence ID" value="ACN48941.1"/>
    <property type="molecule type" value="mRNA"/>
</dbReference>
<dbReference type="SMR" id="C0JB10"/>
<dbReference type="GO" id="GO:0005576">
    <property type="term" value="C:extracellular region"/>
    <property type="evidence" value="ECO:0007669"/>
    <property type="project" value="UniProtKB-SubCell"/>
</dbReference>
<dbReference type="GO" id="GO:0016829">
    <property type="term" value="F:lyase activity"/>
    <property type="evidence" value="ECO:0007669"/>
    <property type="project" value="UniProtKB-KW"/>
</dbReference>
<dbReference type="GO" id="GO:0046872">
    <property type="term" value="F:metal ion binding"/>
    <property type="evidence" value="ECO:0007669"/>
    <property type="project" value="UniProtKB-KW"/>
</dbReference>
<dbReference type="GO" id="GO:0008081">
    <property type="term" value="F:phosphoric diester hydrolase activity"/>
    <property type="evidence" value="ECO:0007669"/>
    <property type="project" value="InterPro"/>
</dbReference>
<dbReference type="GO" id="GO:0090729">
    <property type="term" value="F:toxin activity"/>
    <property type="evidence" value="ECO:0007669"/>
    <property type="project" value="UniProtKB-KW"/>
</dbReference>
<dbReference type="GO" id="GO:0031640">
    <property type="term" value="P:killing of cells of another organism"/>
    <property type="evidence" value="ECO:0007669"/>
    <property type="project" value="UniProtKB-KW"/>
</dbReference>
<dbReference type="GO" id="GO:0016042">
    <property type="term" value="P:lipid catabolic process"/>
    <property type="evidence" value="ECO:0007669"/>
    <property type="project" value="UniProtKB-KW"/>
</dbReference>
<dbReference type="CDD" id="cd08576">
    <property type="entry name" value="GDPD_like_SMaseD_PLD"/>
    <property type="match status" value="1"/>
</dbReference>
<dbReference type="Gene3D" id="3.20.20.190">
    <property type="entry name" value="Phosphatidylinositol (PI) phosphodiesterase"/>
    <property type="match status" value="1"/>
</dbReference>
<dbReference type="InterPro" id="IPR017946">
    <property type="entry name" value="PLC-like_Pdiesterase_TIM-brl"/>
</dbReference>
<dbReference type="SUPFAM" id="SSF51695">
    <property type="entry name" value="PLC-like phosphodiesterases"/>
    <property type="match status" value="1"/>
</dbReference>
<accession>C0JB10</accession>
<organism>
    <name type="scientific">Loxosceles sp. (strain 4 GJB-2008)</name>
    <name type="common">Recluse spider</name>
    <dbReference type="NCBI Taxonomy" id="575961"/>
    <lineage>
        <taxon>Eukaryota</taxon>
        <taxon>Metazoa</taxon>
        <taxon>Ecdysozoa</taxon>
        <taxon>Arthropoda</taxon>
        <taxon>Chelicerata</taxon>
        <taxon>Arachnida</taxon>
        <taxon>Araneae</taxon>
        <taxon>Araneomorphae</taxon>
        <taxon>Haplogynae</taxon>
        <taxon>Scytodoidea</taxon>
        <taxon>Sicariidae</taxon>
        <taxon>Loxosceles</taxon>
    </lineage>
</organism>
<comment type="function">
    <text evidence="1 3">Dermonecrotic toxins cleave the phosphodiester linkage between the phosphate and headgroup of certain phospholipids (sphingolipid and lysolipid substrates), forming an alcohol (often choline) and a cyclic phosphate (By similarity). This toxin acts on sphingomyelin (SM) (By similarity). It may also act on ceramide phosphoethanolamine (CPE), lysophosphatidylcholine (LPC) and lysophosphatidylethanolamine (LPE), but not on lysophosphatidylserine (LPS), and lysophosphatidylglycerol (LPG) (By similarity). It acts by transphosphatidylation, releasing exclusively cyclic phosphate products as second products (By similarity). Induces dermonecrosis, hemolysis, increased vascular permeability, edema, inflammatory response, and platelet aggregation (By similarity).</text>
</comment>
<comment type="catalytic activity">
    <reaction evidence="1">
        <text>an N-(acyl)-sphingosylphosphocholine = an N-(acyl)-sphingosyl-1,3-cyclic phosphate + choline</text>
        <dbReference type="Rhea" id="RHEA:60652"/>
        <dbReference type="ChEBI" id="CHEBI:15354"/>
        <dbReference type="ChEBI" id="CHEBI:64583"/>
        <dbReference type="ChEBI" id="CHEBI:143892"/>
    </reaction>
</comment>
<comment type="catalytic activity">
    <reaction evidence="1">
        <text>an N-(acyl)-sphingosylphosphoethanolamine = an N-(acyl)-sphingosyl-1,3-cyclic phosphate + ethanolamine</text>
        <dbReference type="Rhea" id="RHEA:60648"/>
        <dbReference type="ChEBI" id="CHEBI:57603"/>
        <dbReference type="ChEBI" id="CHEBI:143891"/>
        <dbReference type="ChEBI" id="CHEBI:143892"/>
    </reaction>
</comment>
<comment type="catalytic activity">
    <reaction evidence="1">
        <text>a 1-acyl-sn-glycero-3-phosphocholine = a 1-acyl-sn-glycero-2,3-cyclic phosphate + choline</text>
        <dbReference type="Rhea" id="RHEA:60700"/>
        <dbReference type="ChEBI" id="CHEBI:15354"/>
        <dbReference type="ChEBI" id="CHEBI:58168"/>
        <dbReference type="ChEBI" id="CHEBI:143947"/>
    </reaction>
</comment>
<comment type="catalytic activity">
    <reaction evidence="1">
        <text>a 1-acyl-sn-glycero-3-phosphoethanolamine = a 1-acyl-sn-glycero-2,3-cyclic phosphate + ethanolamine</text>
        <dbReference type="Rhea" id="RHEA:60704"/>
        <dbReference type="ChEBI" id="CHEBI:57603"/>
        <dbReference type="ChEBI" id="CHEBI:64381"/>
        <dbReference type="ChEBI" id="CHEBI:143947"/>
    </reaction>
</comment>
<comment type="cofactor">
    <cofactor evidence="5">
        <name>Mg(2+)</name>
        <dbReference type="ChEBI" id="CHEBI:18420"/>
    </cofactor>
    <text evidence="5">Binds 1 Mg(2+) ion per subunit.</text>
</comment>
<comment type="subcellular location">
    <subcellularLocation>
        <location evidence="8">Secreted</location>
    </subcellularLocation>
</comment>
<comment type="tissue specificity">
    <text evidence="8">Expressed by the venom gland.</text>
</comment>
<comment type="similarity">
    <text evidence="7">Belongs to the arthropod phospholipase D family. Class I subfamily.</text>
</comment>
<comment type="caution">
    <text evidence="1 2 4">The most common activity assay for dermonecrotic toxins detects enzymatic activity by monitoring choline release from substrate. Liberation of choline from sphingomyelin (SM) or lysophosphatidylcholine (LPC) is commonly assumed to result from substrate hydrolysis, giving either ceramide-1-phosphate (C1P) or lysophosphatidic acid (LPA), respectively, as a second product. However, two studies from Lajoie and colleagues (2013 and 2015) report the observation of exclusive formation of cyclic phosphate products as second products, resulting from intramolecular transphosphatidylation. Cyclic phosphates have vastly different biological properties from their monoester counterparts, and they may be relevant to the pathology of brown spider envenomation.</text>
</comment>
<proteinExistence type="evidence at transcript level"/>
<protein>
    <recommendedName>
        <fullName evidence="6">Dermonecrotic toxin Ls4SicTox-alphaIII1i</fullName>
        <ecNumber evidence="4">4.6.1.-</ecNumber>
    </recommendedName>
    <alternativeName>
        <fullName>Phospholipase D</fullName>
        <shortName>PLD</shortName>
    </alternativeName>
    <alternativeName>
        <fullName>Sphingomyelin phosphodiesterase D</fullName>
        <shortName>SMD</shortName>
        <shortName>SMase D</shortName>
        <shortName>Sphingomyelinase D</shortName>
    </alternativeName>
</protein>
<feature type="chain" id="PRO_0000392824" description="Dermonecrotic toxin Ls4SicTox-alphaIII1i">
    <location>
        <begin position="1" status="less than"/>
        <end position="276"/>
    </location>
</feature>
<feature type="active site" evidence="5">
    <location>
        <position position="3"/>
    </location>
</feature>
<feature type="active site" description="Nucleophile" evidence="5">
    <location>
        <position position="38"/>
    </location>
</feature>
<feature type="binding site" evidence="5">
    <location>
        <position position="23"/>
    </location>
    <ligand>
        <name>Mg(2+)</name>
        <dbReference type="ChEBI" id="CHEBI:18420"/>
    </ligand>
</feature>
<feature type="binding site" evidence="5">
    <location>
        <position position="25"/>
    </location>
    <ligand>
        <name>Mg(2+)</name>
        <dbReference type="ChEBI" id="CHEBI:18420"/>
    </ligand>
</feature>
<feature type="binding site" evidence="5">
    <location>
        <position position="82"/>
    </location>
    <ligand>
        <name>Mg(2+)</name>
        <dbReference type="ChEBI" id="CHEBI:18420"/>
    </ligand>
</feature>
<feature type="disulfide bond" evidence="5">
    <location>
        <begin position="42"/>
        <end position="48"/>
    </location>
</feature>
<feature type="non-terminal residue">
    <location>
        <position position="1"/>
    </location>
</feature>
<keyword id="KW-0204">Cytolysis</keyword>
<keyword id="KW-1061">Dermonecrotic toxin</keyword>
<keyword id="KW-1015">Disulfide bond</keyword>
<keyword id="KW-0354">Hemolysis</keyword>
<keyword id="KW-0442">Lipid degradation</keyword>
<keyword id="KW-0443">Lipid metabolism</keyword>
<keyword id="KW-0456">Lyase</keyword>
<keyword id="KW-0460">Magnesium</keyword>
<keyword id="KW-0479">Metal-binding</keyword>
<keyword id="KW-0964">Secreted</keyword>
<keyword id="KW-0800">Toxin</keyword>
<name>A311_LOXS4</name>